<sequence>MKPKVFITRQIPENGIKMIEKFYEIELWKDPKAPPRGVLLEKVREVDALVTLVTDKVDKELLENAPKLKIIAQYAVGYDNIDIEEATKRGIYVTNTPGVLTDATADLAFALLLAVARRIVEADAFVRSGEWKKSEVGWHPLMFLGYGLKGKTLGIVGFGRIGQALAKRAKGFGMKIIYYSRTRKPEAEEEIGAEYVDFETLLKESDFISLHVPLTKETYHMIGEKELKLMKPNAILINTSRGAVVDTNALIKALKEGWIAGAGLDVFEEEPYYNEELFKLKNVVLAPHIGSATHEAREGMAELVAKNLIAFAKGEIPPNLVNKDVLTSSPP</sequence>
<protein>
    <recommendedName>
        <fullName evidence="1">Glyoxylate reductase</fullName>
        <ecNumber evidence="1">1.1.1.26</ecNumber>
    </recommendedName>
</protein>
<accession>Q9C4M5</accession>
<accession>H3ZJV9</accession>
<comment type="catalytic activity">
    <reaction evidence="1">
        <text>glycolate + NAD(+) = glyoxylate + NADH + H(+)</text>
        <dbReference type="Rhea" id="RHEA:18229"/>
        <dbReference type="ChEBI" id="CHEBI:15378"/>
        <dbReference type="ChEBI" id="CHEBI:29805"/>
        <dbReference type="ChEBI" id="CHEBI:36655"/>
        <dbReference type="ChEBI" id="CHEBI:57540"/>
        <dbReference type="ChEBI" id="CHEBI:57945"/>
        <dbReference type="EC" id="1.1.1.26"/>
    </reaction>
</comment>
<comment type="biophysicochemical properties">
    <kinetics>
        <KM>0.73 mM for glyoxylate</KM>
        <KM>1.3 mM for hydroxypyruvate</KM>
        <KM>0.067 mM for NADH</KM>
    </kinetics>
    <phDependence>
        <text>Optimum pH is 6.5.</text>
    </phDependence>
    <temperatureDependence>
        <text>Optimum temperature is 90 degrees Celsius. Extremely thermostable.</text>
    </temperatureDependence>
</comment>
<comment type="subunit">
    <text evidence="1 2">Homodimer.</text>
</comment>
<comment type="subcellular location">
    <subcellularLocation>
        <location>Cytoplasm</location>
    </subcellularLocation>
</comment>
<comment type="similarity">
    <text evidence="1">Belongs to the D-isomer specific 2-hydroxyacid dehydrogenase family. GyaR subfamily.</text>
</comment>
<dbReference type="EC" id="1.1.1.26" evidence="1"/>
<dbReference type="EMBL" id="AB033995">
    <property type="protein sequence ID" value="BAB40320.1"/>
    <property type="molecule type" value="Genomic_DNA"/>
</dbReference>
<dbReference type="EMBL" id="CP006670">
    <property type="protein sequence ID" value="EHR79758.1"/>
    <property type="molecule type" value="Genomic_DNA"/>
</dbReference>
<dbReference type="RefSeq" id="WP_004066272.1">
    <property type="nucleotide sequence ID" value="NC_022084.1"/>
</dbReference>
<dbReference type="SMR" id="Q9C4M5"/>
<dbReference type="STRING" id="523849.OCC_02245"/>
<dbReference type="PaxDb" id="523849-OCC_02245"/>
<dbReference type="GeneID" id="16548498"/>
<dbReference type="KEGG" id="tlt:OCC_02245"/>
<dbReference type="HOGENOM" id="CLU_019796_1_2_2"/>
<dbReference type="OrthoDB" id="34275at2157"/>
<dbReference type="BRENDA" id="1.1.1.26">
    <property type="organism ID" value="6302"/>
</dbReference>
<dbReference type="SABIO-RK" id="Q9C4M5"/>
<dbReference type="Proteomes" id="UP000015502">
    <property type="component" value="Chromosome"/>
</dbReference>
<dbReference type="GO" id="GO:0005829">
    <property type="term" value="C:cytosol"/>
    <property type="evidence" value="ECO:0007669"/>
    <property type="project" value="TreeGrafter"/>
</dbReference>
<dbReference type="GO" id="GO:0047964">
    <property type="term" value="F:glyoxylate reductase (NADH) activity"/>
    <property type="evidence" value="ECO:0007669"/>
    <property type="project" value="UniProtKB-UniRule"/>
</dbReference>
<dbReference type="GO" id="GO:0030267">
    <property type="term" value="F:glyoxylate reductase (NADPH) activity"/>
    <property type="evidence" value="ECO:0007669"/>
    <property type="project" value="TreeGrafter"/>
</dbReference>
<dbReference type="GO" id="GO:0016618">
    <property type="term" value="F:hydroxypyruvate reductase [NAD(P)H] activity"/>
    <property type="evidence" value="ECO:0007669"/>
    <property type="project" value="TreeGrafter"/>
</dbReference>
<dbReference type="GO" id="GO:0051287">
    <property type="term" value="F:NAD binding"/>
    <property type="evidence" value="ECO:0007669"/>
    <property type="project" value="InterPro"/>
</dbReference>
<dbReference type="CDD" id="cd05301">
    <property type="entry name" value="GDH"/>
    <property type="match status" value="1"/>
</dbReference>
<dbReference type="FunFam" id="3.40.50.720:FF:000462">
    <property type="entry name" value="Glyoxylate reductase (NADP+)"/>
    <property type="match status" value="1"/>
</dbReference>
<dbReference type="Gene3D" id="3.40.50.720">
    <property type="entry name" value="NAD(P)-binding Rossmann-like Domain"/>
    <property type="match status" value="2"/>
</dbReference>
<dbReference type="HAMAP" id="MF_00776">
    <property type="entry name" value="GyaR"/>
    <property type="match status" value="1"/>
</dbReference>
<dbReference type="InterPro" id="IPR050223">
    <property type="entry name" value="D-isomer_2-hydroxyacid_DH"/>
</dbReference>
<dbReference type="InterPro" id="IPR006139">
    <property type="entry name" value="D-isomer_2_OHA_DH_cat_dom"/>
</dbReference>
<dbReference type="InterPro" id="IPR029753">
    <property type="entry name" value="D-isomer_DH_CS"/>
</dbReference>
<dbReference type="InterPro" id="IPR029752">
    <property type="entry name" value="D-isomer_DH_CS1"/>
</dbReference>
<dbReference type="InterPro" id="IPR006140">
    <property type="entry name" value="D-isomer_DH_NAD-bd"/>
</dbReference>
<dbReference type="InterPro" id="IPR023519">
    <property type="entry name" value="Glyoxylate_reductase_GyaR"/>
</dbReference>
<dbReference type="InterPro" id="IPR036291">
    <property type="entry name" value="NAD(P)-bd_dom_sf"/>
</dbReference>
<dbReference type="NCBIfam" id="NF009714">
    <property type="entry name" value="PRK13243.1"/>
    <property type="match status" value="1"/>
</dbReference>
<dbReference type="PANTHER" id="PTHR10996">
    <property type="entry name" value="2-HYDROXYACID DEHYDROGENASE-RELATED"/>
    <property type="match status" value="1"/>
</dbReference>
<dbReference type="PANTHER" id="PTHR10996:SF283">
    <property type="entry name" value="GLYOXYLATE_HYDROXYPYRUVATE REDUCTASE B"/>
    <property type="match status" value="1"/>
</dbReference>
<dbReference type="Pfam" id="PF00389">
    <property type="entry name" value="2-Hacid_dh"/>
    <property type="match status" value="1"/>
</dbReference>
<dbReference type="Pfam" id="PF02826">
    <property type="entry name" value="2-Hacid_dh_C"/>
    <property type="match status" value="1"/>
</dbReference>
<dbReference type="SUPFAM" id="SSF52283">
    <property type="entry name" value="Formate/glycerate dehydrogenase catalytic domain-like"/>
    <property type="match status" value="1"/>
</dbReference>
<dbReference type="SUPFAM" id="SSF51735">
    <property type="entry name" value="NAD(P)-binding Rossmann-fold domains"/>
    <property type="match status" value="1"/>
</dbReference>
<dbReference type="PROSITE" id="PS00065">
    <property type="entry name" value="D_2_HYDROXYACID_DH_1"/>
    <property type="match status" value="1"/>
</dbReference>
<dbReference type="PROSITE" id="PS00670">
    <property type="entry name" value="D_2_HYDROXYACID_DH_2"/>
    <property type="match status" value="1"/>
</dbReference>
<dbReference type="PROSITE" id="PS00671">
    <property type="entry name" value="D_2_HYDROXYACID_DH_3"/>
    <property type="match status" value="1"/>
</dbReference>
<organism>
    <name type="scientific">Thermococcus litoralis (strain ATCC 51850 / DSM 5473 / JCM 8560 / NS-C)</name>
    <dbReference type="NCBI Taxonomy" id="523849"/>
    <lineage>
        <taxon>Archaea</taxon>
        <taxon>Methanobacteriati</taxon>
        <taxon>Methanobacteriota</taxon>
        <taxon>Thermococci</taxon>
        <taxon>Thermococcales</taxon>
        <taxon>Thermococcaceae</taxon>
        <taxon>Thermococcus</taxon>
    </lineage>
</organism>
<proteinExistence type="evidence at protein level"/>
<reference key="1">
    <citation type="journal article" date="2001" name="Eur. J. Biochem.">
        <title>A novel hyperthermophilic archaeal glyoxylate reductase from Thermococcus litoralis. Characterization, gene cloning, nucleotide sequence and expression in Escherichia coli.</title>
        <authorList>
            <person name="Ohshima T."/>
            <person name="Nunoura-Kominato N."/>
            <person name="Kudome T."/>
            <person name="Sakuraba H."/>
        </authorList>
    </citation>
    <scope>NUCLEOTIDE SEQUENCE [GENOMIC DNA]</scope>
    <scope>PROTEIN SEQUENCE OF 1-19</scope>
    <scope>CHARACTERIZATION</scope>
    <scope>SUBUNIT</scope>
    <source>
        <strain>ATCC 51850 / DSM 5473 / JCM 8560 / NS-C</strain>
    </source>
</reference>
<reference key="2">
    <citation type="journal article" date="2012" name="J. Bacteriol.">
        <title>Genome sequence of the model hyperthermophilic archaeon Thermococcus litoralis NS-C.</title>
        <authorList>
            <person name="Gardner A.F."/>
            <person name="Kumar S."/>
            <person name="Perler F.B."/>
        </authorList>
    </citation>
    <scope>NUCLEOTIDE SEQUENCE [LARGE SCALE GENOMIC DNA]</scope>
    <source>
        <strain>ATCC 51850 / DSM 5473 / JCM 8560 / NS-C</strain>
    </source>
</reference>
<name>GYAR_THELN</name>
<evidence type="ECO:0000255" key="1">
    <source>
        <dbReference type="HAMAP-Rule" id="MF_00776"/>
    </source>
</evidence>
<evidence type="ECO:0000269" key="2">
    <source>
    </source>
</evidence>
<gene>
    <name evidence="1" type="primary">gyaR</name>
    <name type="synonym">gr</name>
    <name type="ORF">OCC_02245</name>
</gene>
<feature type="chain" id="PRO_0000075951" description="Glyoxylate reductase">
    <location>
        <begin position="1"/>
        <end position="331"/>
    </location>
</feature>
<feature type="active site" evidence="1">
    <location>
        <position position="241"/>
    </location>
</feature>
<feature type="active site" evidence="1">
    <location>
        <position position="270"/>
    </location>
</feature>
<feature type="active site" description="Proton donor" evidence="1">
    <location>
        <position position="288"/>
    </location>
</feature>
<feature type="binding site" evidence="1">
    <location>
        <begin position="158"/>
        <end position="161"/>
    </location>
    <ligand>
        <name>NADP(+)</name>
        <dbReference type="ChEBI" id="CHEBI:58349"/>
    </ligand>
</feature>
<feature type="binding site" evidence="1">
    <location>
        <begin position="180"/>
        <end position="182"/>
    </location>
    <ligand>
        <name>NADP(+)</name>
        <dbReference type="ChEBI" id="CHEBI:58349"/>
    </ligand>
</feature>
<feature type="binding site" evidence="1">
    <location>
        <begin position="239"/>
        <end position="241"/>
    </location>
    <ligand>
        <name>NADP(+)</name>
        <dbReference type="ChEBI" id="CHEBI:58349"/>
    </ligand>
</feature>
<feature type="binding site" evidence="1">
    <location>
        <begin position="288"/>
        <end position="290"/>
    </location>
    <ligand>
        <name>NADP(+)</name>
        <dbReference type="ChEBI" id="CHEBI:58349"/>
    </ligand>
</feature>
<keyword id="KW-0963">Cytoplasm</keyword>
<keyword id="KW-0903">Direct protein sequencing</keyword>
<keyword id="KW-0520">NAD</keyword>
<keyword id="KW-0560">Oxidoreductase</keyword>